<sequence>MAEEQVLNTHNASILLSAANKSHYPQDDLPEIALAGRSNVGKSSFINTILGRKNLARTSSKPGKTQLLNFFNIDDKLRFVDVPGYGYAKVSKSERAKWGKMIEEYLTSRDNLRAVVSLVDLRHAPSKEDIQMYDFLKYYDIPVIVVATKADKIPHGKWNKHESVVKKALNFDKSDTFIVFSSVERIGIDDSWDAILEQV</sequence>
<feature type="chain" id="PRO_0000157791" description="Probable GTP-binding protein EngB">
    <location>
        <begin position="1"/>
        <end position="199"/>
    </location>
</feature>
<feature type="domain" description="EngB-type G" evidence="1">
    <location>
        <begin position="28"/>
        <end position="199"/>
    </location>
</feature>
<feature type="binding site" evidence="1">
    <location>
        <begin position="36"/>
        <end position="43"/>
    </location>
    <ligand>
        <name>GTP</name>
        <dbReference type="ChEBI" id="CHEBI:37565"/>
    </ligand>
</feature>
<feature type="binding site" evidence="1">
    <location>
        <position position="43"/>
    </location>
    <ligand>
        <name>Mg(2+)</name>
        <dbReference type="ChEBI" id="CHEBI:18420"/>
    </ligand>
</feature>
<feature type="binding site" evidence="1">
    <location>
        <begin position="63"/>
        <end position="67"/>
    </location>
    <ligand>
        <name>GTP</name>
        <dbReference type="ChEBI" id="CHEBI:37565"/>
    </ligand>
</feature>
<feature type="binding site" evidence="1">
    <location>
        <position position="65"/>
    </location>
    <ligand>
        <name>Mg(2+)</name>
        <dbReference type="ChEBI" id="CHEBI:18420"/>
    </ligand>
</feature>
<feature type="binding site" evidence="1">
    <location>
        <begin position="81"/>
        <end position="84"/>
    </location>
    <ligand>
        <name>GTP</name>
        <dbReference type="ChEBI" id="CHEBI:37565"/>
    </ligand>
</feature>
<feature type="binding site" evidence="1">
    <location>
        <begin position="148"/>
        <end position="151"/>
    </location>
    <ligand>
        <name>GTP</name>
        <dbReference type="ChEBI" id="CHEBI:37565"/>
    </ligand>
</feature>
<feature type="binding site" evidence="1">
    <location>
        <begin position="180"/>
        <end position="182"/>
    </location>
    <ligand>
        <name>GTP</name>
        <dbReference type="ChEBI" id="CHEBI:37565"/>
    </ligand>
</feature>
<protein>
    <recommendedName>
        <fullName evidence="1">Probable GTP-binding protein EngB</fullName>
    </recommendedName>
</protein>
<comment type="function">
    <text evidence="1">Necessary for normal cell division and for the maintenance of normal septation.</text>
</comment>
<comment type="cofactor">
    <cofactor evidence="1">
        <name>Mg(2+)</name>
        <dbReference type="ChEBI" id="CHEBI:18420"/>
    </cofactor>
</comment>
<comment type="similarity">
    <text evidence="1">Belongs to the TRAFAC class TrmE-Era-EngA-EngB-Septin-like GTPase superfamily. EngB GTPase family.</text>
</comment>
<dbReference type="EMBL" id="AE014074">
    <property type="protein sequence ID" value="AAM79212.1"/>
    <property type="molecule type" value="Genomic_DNA"/>
</dbReference>
<dbReference type="SMR" id="P0DA92"/>
<dbReference type="KEGG" id="spg:SpyM3_0605"/>
<dbReference type="HOGENOM" id="CLU_033732_3_0_9"/>
<dbReference type="Proteomes" id="UP000000564">
    <property type="component" value="Chromosome"/>
</dbReference>
<dbReference type="GO" id="GO:0005829">
    <property type="term" value="C:cytosol"/>
    <property type="evidence" value="ECO:0007669"/>
    <property type="project" value="TreeGrafter"/>
</dbReference>
<dbReference type="GO" id="GO:0005525">
    <property type="term" value="F:GTP binding"/>
    <property type="evidence" value="ECO:0007669"/>
    <property type="project" value="UniProtKB-UniRule"/>
</dbReference>
<dbReference type="GO" id="GO:0046872">
    <property type="term" value="F:metal ion binding"/>
    <property type="evidence" value="ECO:0007669"/>
    <property type="project" value="UniProtKB-KW"/>
</dbReference>
<dbReference type="GO" id="GO:0000917">
    <property type="term" value="P:division septum assembly"/>
    <property type="evidence" value="ECO:0007669"/>
    <property type="project" value="UniProtKB-KW"/>
</dbReference>
<dbReference type="CDD" id="cd01876">
    <property type="entry name" value="YihA_EngB"/>
    <property type="match status" value="1"/>
</dbReference>
<dbReference type="FunFam" id="3.40.50.300:FF:000098">
    <property type="entry name" value="Probable GTP-binding protein EngB"/>
    <property type="match status" value="1"/>
</dbReference>
<dbReference type="Gene3D" id="3.40.50.300">
    <property type="entry name" value="P-loop containing nucleotide triphosphate hydrolases"/>
    <property type="match status" value="1"/>
</dbReference>
<dbReference type="HAMAP" id="MF_00321">
    <property type="entry name" value="GTPase_EngB"/>
    <property type="match status" value="1"/>
</dbReference>
<dbReference type="InterPro" id="IPR030393">
    <property type="entry name" value="G_ENGB_dom"/>
</dbReference>
<dbReference type="InterPro" id="IPR006073">
    <property type="entry name" value="GTP-bd"/>
</dbReference>
<dbReference type="InterPro" id="IPR019987">
    <property type="entry name" value="GTP-bd_ribosome_bio_YsxC"/>
</dbReference>
<dbReference type="InterPro" id="IPR027417">
    <property type="entry name" value="P-loop_NTPase"/>
</dbReference>
<dbReference type="InterPro" id="IPR005225">
    <property type="entry name" value="Small_GTP-bd"/>
</dbReference>
<dbReference type="NCBIfam" id="TIGR03598">
    <property type="entry name" value="GTPase_YsxC"/>
    <property type="match status" value="1"/>
</dbReference>
<dbReference type="NCBIfam" id="TIGR00231">
    <property type="entry name" value="small_GTP"/>
    <property type="match status" value="1"/>
</dbReference>
<dbReference type="PANTHER" id="PTHR11649:SF13">
    <property type="entry name" value="ENGB-TYPE G DOMAIN-CONTAINING PROTEIN"/>
    <property type="match status" value="1"/>
</dbReference>
<dbReference type="PANTHER" id="PTHR11649">
    <property type="entry name" value="MSS1/TRME-RELATED GTP-BINDING PROTEIN"/>
    <property type="match status" value="1"/>
</dbReference>
<dbReference type="Pfam" id="PF01926">
    <property type="entry name" value="MMR_HSR1"/>
    <property type="match status" value="1"/>
</dbReference>
<dbReference type="SUPFAM" id="SSF52540">
    <property type="entry name" value="P-loop containing nucleoside triphosphate hydrolases"/>
    <property type="match status" value="1"/>
</dbReference>
<dbReference type="PROSITE" id="PS51706">
    <property type="entry name" value="G_ENGB"/>
    <property type="match status" value="1"/>
</dbReference>
<evidence type="ECO:0000255" key="1">
    <source>
        <dbReference type="HAMAP-Rule" id="MF_00321"/>
    </source>
</evidence>
<proteinExistence type="inferred from homology"/>
<reference key="1">
    <citation type="journal article" date="2002" name="Proc. Natl. Acad. Sci. U.S.A.">
        <title>Genome sequence of a serotype M3 strain of group A Streptococcus: phage-encoded toxins, the high-virulence phenotype, and clone emergence.</title>
        <authorList>
            <person name="Beres S.B."/>
            <person name="Sylva G.L."/>
            <person name="Barbian K.D."/>
            <person name="Lei B."/>
            <person name="Hoff J.S."/>
            <person name="Mammarella N.D."/>
            <person name="Liu M.-Y."/>
            <person name="Smoot J.C."/>
            <person name="Porcella S.F."/>
            <person name="Parkins L.D."/>
            <person name="Campbell D.S."/>
            <person name="Smith T.M."/>
            <person name="McCormick J.K."/>
            <person name="Leung D.Y.M."/>
            <person name="Schlievert P.M."/>
            <person name="Musser J.M."/>
        </authorList>
    </citation>
    <scope>NUCLEOTIDE SEQUENCE [LARGE SCALE GENOMIC DNA]</scope>
    <source>
        <strain>ATCC BAA-595 / MGAS315</strain>
    </source>
</reference>
<gene>
    <name evidence="1" type="primary">engB</name>
    <name type="ordered locus">SpyM3_0605</name>
</gene>
<name>ENGB_STRP3</name>
<accession>P0DA92</accession>
<accession>Q8K7V8</accession>
<keyword id="KW-0131">Cell cycle</keyword>
<keyword id="KW-0132">Cell division</keyword>
<keyword id="KW-0342">GTP-binding</keyword>
<keyword id="KW-0460">Magnesium</keyword>
<keyword id="KW-0479">Metal-binding</keyword>
<keyword id="KW-0547">Nucleotide-binding</keyword>
<keyword id="KW-0717">Septation</keyword>
<organism>
    <name type="scientific">Streptococcus pyogenes serotype M3 (strain ATCC BAA-595 / MGAS315)</name>
    <dbReference type="NCBI Taxonomy" id="198466"/>
    <lineage>
        <taxon>Bacteria</taxon>
        <taxon>Bacillati</taxon>
        <taxon>Bacillota</taxon>
        <taxon>Bacilli</taxon>
        <taxon>Lactobacillales</taxon>
        <taxon>Streptococcaceae</taxon>
        <taxon>Streptococcus</taxon>
    </lineage>
</organism>